<protein>
    <recommendedName>
        <fullName evidence="1">tRNA hydroxylation protein P</fullName>
        <ecNumber evidence="3">3.4.-.-</ecNumber>
    </recommendedName>
</protein>
<dbReference type="EC" id="3.4.-.-" evidence="3"/>
<dbReference type="EMBL" id="AE001439">
    <property type="protein sequence ID" value="AAD05738.1"/>
    <property type="molecule type" value="Genomic_DNA"/>
</dbReference>
<dbReference type="PIR" id="D71966">
    <property type="entry name" value="D71966"/>
</dbReference>
<dbReference type="RefSeq" id="WP_001077418.1">
    <property type="nucleotide sequence ID" value="NC_000921.1"/>
</dbReference>
<dbReference type="MEROPS" id="U32.002"/>
<dbReference type="KEGG" id="hpj:jhp_0155"/>
<dbReference type="PATRIC" id="fig|85963.30.peg.867"/>
<dbReference type="eggNOG" id="COG0826">
    <property type="taxonomic scope" value="Bacteria"/>
</dbReference>
<dbReference type="Proteomes" id="UP000000804">
    <property type="component" value="Chromosome"/>
</dbReference>
<dbReference type="GO" id="GO:0008233">
    <property type="term" value="F:peptidase activity"/>
    <property type="evidence" value="ECO:0007669"/>
    <property type="project" value="UniProtKB-KW"/>
</dbReference>
<dbReference type="GO" id="GO:0006508">
    <property type="term" value="P:proteolysis"/>
    <property type="evidence" value="ECO:0007669"/>
    <property type="project" value="UniProtKB-KW"/>
</dbReference>
<dbReference type="GO" id="GO:0008033">
    <property type="term" value="P:tRNA processing"/>
    <property type="evidence" value="ECO:0007669"/>
    <property type="project" value="UniProtKB-KW"/>
</dbReference>
<dbReference type="InterPro" id="IPR001539">
    <property type="entry name" value="Peptidase_U32"/>
</dbReference>
<dbReference type="InterPro" id="IPR051454">
    <property type="entry name" value="RNA/ubiquinone_mod_enzymes"/>
</dbReference>
<dbReference type="PANTHER" id="PTHR30217">
    <property type="entry name" value="PEPTIDASE U32 FAMILY"/>
    <property type="match status" value="1"/>
</dbReference>
<dbReference type="PANTHER" id="PTHR30217:SF6">
    <property type="entry name" value="TRNA HYDROXYLATION PROTEIN P"/>
    <property type="match status" value="1"/>
</dbReference>
<dbReference type="Pfam" id="PF01136">
    <property type="entry name" value="Peptidase_U32"/>
    <property type="match status" value="1"/>
</dbReference>
<dbReference type="PROSITE" id="PS01276">
    <property type="entry name" value="PEPTIDASE_U32"/>
    <property type="match status" value="1"/>
</dbReference>
<keyword id="KW-0378">Hydrolase</keyword>
<keyword id="KW-0645">Protease</keyword>
<keyword id="KW-0732">Signal</keyword>
<keyword id="KW-0819">tRNA processing</keyword>
<evidence type="ECO:0000250" key="1">
    <source>
        <dbReference type="UniProtKB" id="P76403"/>
    </source>
</evidence>
<evidence type="ECO:0000255" key="2"/>
<evidence type="ECO:0000305" key="3"/>
<feature type="signal peptide" evidence="2">
    <location>
        <begin position="1"/>
        <end position="58"/>
    </location>
</feature>
<feature type="chain" id="PRO_0000028527" description="tRNA hydroxylation protein P">
    <location>
        <begin position="59"/>
        <end position="422"/>
    </location>
</feature>
<sequence length="422" mass="47259">MNQVELLSPAGNLKKLKIALNYGADAVYGGVSHFSLRNRAGKEFTLETFKEGIDYAHALDKKVYATINGFPFNSQLKLLEEHLYKMAELEPDAFIIAAPGVIKLASKIAPHIPVHLSTQANVLNTLDAQVFYDLGVKRIVCARELSLNDAVEIKKALPDLELEIFVHGSMCFAFSGRCLISALQKGRVPNRGSCANDCRFDYEYYVKNPDNGVMMRLVEEEGVGTHIFNAKDLNLSGHIAEILSSNAISALKIEGRTKSSYYAAQTTRIYRLAVDDFYHNTLKPSFYASELNTLKNRGFTDGYLMRRPFERLDTQNHQTAISEGDFQVNGEITEDGRFFACKFTTTTNTAYEIIAPKNAAITPIVNDIGKIYTFEKRSYLVLYKILLENNTELETIHSGNVNLVRLPAPLPAFSFLRTQVRV</sequence>
<reference key="1">
    <citation type="journal article" date="1999" name="Nature">
        <title>Genomic sequence comparison of two unrelated isolates of the human gastric pathogen Helicobacter pylori.</title>
        <authorList>
            <person name="Alm R.A."/>
            <person name="Ling L.-S.L."/>
            <person name="Moir D.T."/>
            <person name="King B.L."/>
            <person name="Brown E.D."/>
            <person name="Doig P.C."/>
            <person name="Smith D.R."/>
            <person name="Noonan B."/>
            <person name="Guild B.C."/>
            <person name="deJonge B.L."/>
            <person name="Carmel G."/>
            <person name="Tummino P.J."/>
            <person name="Caruso A."/>
            <person name="Uria-Nickelsen M."/>
            <person name="Mills D.M."/>
            <person name="Ives C."/>
            <person name="Gibson R."/>
            <person name="Merberg D."/>
            <person name="Mills S.D."/>
            <person name="Jiang Q."/>
            <person name="Taylor D.E."/>
            <person name="Vovis G.F."/>
            <person name="Trust T.J."/>
        </authorList>
    </citation>
    <scope>NUCLEOTIDE SEQUENCE [LARGE SCALE GENOMIC DNA]</scope>
    <source>
        <strain>J99 / ATCC 700824</strain>
    </source>
</reference>
<name>TRHP_HELPJ</name>
<organism>
    <name type="scientific">Helicobacter pylori (strain J99 / ATCC 700824)</name>
    <name type="common">Campylobacter pylori J99</name>
    <dbReference type="NCBI Taxonomy" id="85963"/>
    <lineage>
        <taxon>Bacteria</taxon>
        <taxon>Pseudomonadati</taxon>
        <taxon>Campylobacterota</taxon>
        <taxon>Epsilonproteobacteria</taxon>
        <taxon>Campylobacterales</taxon>
        <taxon>Helicobacteraceae</taxon>
        <taxon>Helicobacter</taxon>
    </lineage>
</organism>
<accession>Q9ZMR3</accession>
<comment type="function">
    <text evidence="1">Involved in prephenate-dependent formation of 5-hydroxyuridine (ho5U) modification at position 34 in tRNAs, the first step in 5-carboxymethoxyuridine (cmo5U) biosynthesis.</text>
</comment>
<comment type="similarity">
    <text evidence="3">Belongs to the peptidase U32 family.</text>
</comment>
<proteinExistence type="inferred from homology"/>
<gene>
    <name evidence="1" type="primary">trhP</name>
    <name type="ordered locus">jhp_0155</name>
</gene>